<reference key="1">
    <citation type="journal article" date="1992" name="J. Mol. Biol.">
        <title>The Escherichia coli rpoB60 mutation blocks antitermination by coliphage HK022 Q-function.</title>
        <authorList>
            <person name="Atkinson B.L."/>
            <person name="Gottesman M.E."/>
        </authorList>
    </citation>
    <scope>NUCLEOTIDE SEQUENCE [GENOMIC DNA]</scope>
</reference>
<organism>
    <name type="scientific">Escherichia phage HK022</name>
    <name type="common">Bacteriophage HK022</name>
    <dbReference type="NCBI Taxonomy" id="10742"/>
    <lineage>
        <taxon>Viruses</taxon>
        <taxon>Duplodnaviria</taxon>
        <taxon>Heunggongvirae</taxon>
        <taxon>Uroviricota</taxon>
        <taxon>Caudoviricetes</taxon>
        <taxon>Hendrixvirinae</taxon>
        <taxon>Shamshuipovirus</taxon>
    </lineage>
</organism>
<comment type="function">
    <text evidence="1">Mediates the switch from middle to viral late gene expression by associating with host RNA polymerase (RNAP) so that the latter can read without pausing and through transcription terminators preceding late genes. Competes with host factor sigma 70 for binding to RPOB, the beta-subunit of host RNAP. To join the elongation complex, binds a specific DNA Q-binding element (QBE) and interacts with RNAP that is paused during early elongation. Participates in the lysis-lysogeny decision by activating the expression of the late lytic genes.</text>
</comment>
<comment type="subunit">
    <text evidence="1">Interacts with host RPOB (via flap domain); this interaction renders host RNAP resistant to transcription pausing and allows it to read through termination signals. Interacts with host RNA polymerase sigma factor RPOD (via domain-4). Interacts with host NUSA (via N-terminus and AR2 domain); this interaction releases the autoinhibition of NUSA.</text>
</comment>
<comment type="similarity">
    <text evidence="1">Belongs to the phage antitermination Q type 2 family.</text>
</comment>
<proteinExistence type="inferred from homology"/>
<feature type="chain" id="PRO_0000073892" description="Antitermination protein Q">
    <location>
        <begin position="1"/>
        <end position="207"/>
    </location>
</feature>
<feature type="zinc finger region" evidence="1">
    <location>
        <begin position="118"/>
        <end position="147"/>
    </location>
</feature>
<feature type="DNA-binding region" evidence="1">
    <location>
        <begin position="171"/>
        <end position="192"/>
    </location>
</feature>
<feature type="region of interest" description="Disordered" evidence="2">
    <location>
        <begin position="1"/>
        <end position="29"/>
    </location>
</feature>
<feature type="compositionally biased region" description="Polar residues" evidence="2">
    <location>
        <begin position="20"/>
        <end position="29"/>
    </location>
</feature>
<feature type="binding site" evidence="1">
    <location>
        <position position="118"/>
    </location>
    <ligand>
        <name>Zn(2+)</name>
        <dbReference type="ChEBI" id="CHEBI:29105"/>
    </ligand>
</feature>
<feature type="binding site" evidence="1">
    <location>
        <position position="121"/>
    </location>
    <ligand>
        <name>Zn(2+)</name>
        <dbReference type="ChEBI" id="CHEBI:29105"/>
    </ligand>
</feature>
<feature type="binding site" evidence="1">
    <location>
        <position position="144"/>
    </location>
    <ligand>
        <name>Zn(2+)</name>
        <dbReference type="ChEBI" id="CHEBI:29105"/>
    </ligand>
</feature>
<feature type="binding site" evidence="1">
    <location>
        <position position="147"/>
    </location>
    <ligand>
        <name>Zn(2+)</name>
        <dbReference type="ChEBI" id="CHEBI:29105"/>
    </ligand>
</feature>
<feature type="site" description="Interaction with host rpoB" evidence="1">
    <location>
        <position position="101"/>
    </location>
</feature>
<feature type="site" description="Interaction with host RNA polymerase sigma factor RPOD" evidence="1">
    <location>
        <position position="134"/>
    </location>
</feature>
<feature type="site" description="Interaction with host rpoB" evidence="1">
    <location>
        <position position="160"/>
    </location>
</feature>
<feature type="site" description="Interaction with host rpoB" evidence="1">
    <location>
        <position position="165"/>
    </location>
</feature>
<protein>
    <recommendedName>
        <fullName evidence="1">Antitermination protein Q</fullName>
    </recommendedName>
</protein>
<gene>
    <name type="primary">Q</name>
</gene>
<dbReference type="EMBL" id="X60309">
    <property type="protein sequence ID" value="CAA42854.1"/>
    <property type="molecule type" value="Genomic_DNA"/>
</dbReference>
<dbReference type="PIR" id="S28977">
    <property type="entry name" value="S28977"/>
</dbReference>
<dbReference type="RefSeq" id="NP_037694.1">
    <property type="nucleotide sequence ID" value="NC_002166.1"/>
</dbReference>
<dbReference type="SMR" id="Q02582"/>
<dbReference type="KEGG" id="vg:1262474"/>
<dbReference type="OrthoDB" id="8841at10239"/>
<dbReference type="GO" id="GO:0003677">
    <property type="term" value="F:DNA binding"/>
    <property type="evidence" value="ECO:0007669"/>
    <property type="project" value="UniProtKB-UniRule"/>
</dbReference>
<dbReference type="GO" id="GO:0008270">
    <property type="term" value="F:zinc ion binding"/>
    <property type="evidence" value="ECO:0007669"/>
    <property type="project" value="UniProtKB-UniRule"/>
</dbReference>
<dbReference type="GO" id="GO:0006353">
    <property type="term" value="P:DNA-templated transcription termination"/>
    <property type="evidence" value="ECO:0007669"/>
    <property type="project" value="UniProtKB-UniRule"/>
</dbReference>
<dbReference type="GO" id="GO:0031564">
    <property type="term" value="P:transcription antitermination"/>
    <property type="evidence" value="ECO:0007669"/>
    <property type="project" value="UniProtKB-UniRule"/>
</dbReference>
<dbReference type="Gene3D" id="1.10.274.110">
    <property type="match status" value="1"/>
</dbReference>
<dbReference type="HAMAP" id="MF_04158">
    <property type="entry name" value="Antitermination_lambda"/>
    <property type="match status" value="1"/>
</dbReference>
<dbReference type="InterPro" id="IPR038500">
    <property type="entry name" value="Antitermination_sf"/>
</dbReference>
<dbReference type="InterPro" id="IPR003222">
    <property type="entry name" value="Antitermntn"/>
</dbReference>
<dbReference type="InterPro" id="IPR036410">
    <property type="entry name" value="HSP_DnaJ_Cys-rich_dom_sf"/>
</dbReference>
<dbReference type="Pfam" id="PF03589">
    <property type="entry name" value="Antiterm"/>
    <property type="match status" value="2"/>
</dbReference>
<dbReference type="SUPFAM" id="SSF57938">
    <property type="entry name" value="DnaJ/Hsp40 cysteine-rich domain"/>
    <property type="match status" value="1"/>
</dbReference>
<name>REGQ_BPHK0</name>
<accession>Q02582</accession>
<keyword id="KW-0238">DNA-binding</keyword>
<keyword id="KW-0945">Host-virus interaction</keyword>
<keyword id="KW-0479">Metal-binding</keyword>
<keyword id="KW-0804">Transcription</keyword>
<keyword id="KW-0805">Transcription regulation</keyword>
<keyword id="KW-0806">Transcription termination</keyword>
<keyword id="KW-0862">Zinc</keyword>
<keyword id="KW-0863">Zinc-finger</keyword>
<organismHost>
    <name type="scientific">Escherichia coli</name>
    <dbReference type="NCBI Taxonomy" id="562"/>
</organismHost>
<sequence length="207" mass="22488">MRLESVAKFHSPKSPMMSDSPRTTASDSLSGTDVMAAMGMAQSQAGFGMAAFCGKHELSQNDKQKAINYLMQFAHKVSGKYRGVAKLEGNTKAKVLQVLATFAYADYCRSAATPGARCRDCHGTGRAVDIAKTEQWGRVVEKECGRCKGVGYSRMPASAAYRAVTMLIPNLTQPTWSRTVKPLYDALVVQCHKEESIADNILNAVAR</sequence>
<evidence type="ECO:0000255" key="1">
    <source>
        <dbReference type="HAMAP-Rule" id="MF_04158"/>
    </source>
</evidence>
<evidence type="ECO:0000256" key="2">
    <source>
        <dbReference type="SAM" id="MobiDB-lite"/>
    </source>
</evidence>